<accession>Q6G1G7</accession>
<evidence type="ECO:0000255" key="1">
    <source>
        <dbReference type="HAMAP-Rule" id="MF_00382"/>
    </source>
</evidence>
<evidence type="ECO:0000305" key="2"/>
<organism>
    <name type="scientific">Bartonella quintana (strain Toulouse)</name>
    <name type="common">Rochalimaea quintana</name>
    <dbReference type="NCBI Taxonomy" id="283165"/>
    <lineage>
        <taxon>Bacteria</taxon>
        <taxon>Pseudomonadati</taxon>
        <taxon>Pseudomonadota</taxon>
        <taxon>Alphaproteobacteria</taxon>
        <taxon>Hyphomicrobiales</taxon>
        <taxon>Bartonellaceae</taxon>
        <taxon>Bartonella</taxon>
    </lineage>
</organism>
<comment type="function">
    <text evidence="1">Binds directly to 23S ribosomal RNA and is necessary for the in vitro assembly process of the 50S ribosomal subunit. It is not involved in the protein synthesizing functions of that subunit.</text>
</comment>
<comment type="similarity">
    <text evidence="1">Belongs to the bacterial ribosomal protein bL20 family.</text>
</comment>
<feature type="chain" id="PRO_0000243658" description="Large ribosomal subunit protein bL20">
    <location>
        <begin position="1"/>
        <end position="133"/>
    </location>
</feature>
<proteinExistence type="inferred from homology"/>
<name>RL20_BARQU</name>
<protein>
    <recommendedName>
        <fullName evidence="1">Large ribosomal subunit protein bL20</fullName>
    </recommendedName>
    <alternativeName>
        <fullName evidence="2">50S ribosomal protein L20</fullName>
    </alternativeName>
</protein>
<sequence>MARVKRGVVAHAKHKKVLKQAEGFYGRRKNTIRAAKAAVDRSKQYAYRDRKNRKRIFRALWIQRINAAVRAEGLTYGRFIDGLSKAGIEIDRKVLSDIAVHESAAFSALVASAKKALEYLRDTTSNAFEGAVK</sequence>
<gene>
    <name evidence="1" type="primary">rplT</name>
    <name type="ordered locus">BQ00760</name>
</gene>
<reference key="1">
    <citation type="journal article" date="2004" name="Proc. Natl. Acad. Sci. U.S.A.">
        <title>The louse-borne human pathogen Bartonella quintana is a genomic derivative of the zoonotic agent Bartonella henselae.</title>
        <authorList>
            <person name="Alsmark U.C.M."/>
            <person name="Frank A.C."/>
            <person name="Karlberg E.O."/>
            <person name="Legault B.-A."/>
            <person name="Ardell D.H."/>
            <person name="Canbaeck B."/>
            <person name="Eriksson A.-S."/>
            <person name="Naeslund A.K."/>
            <person name="Handley S.A."/>
            <person name="Huvet M."/>
            <person name="La Scola B."/>
            <person name="Holmberg M."/>
            <person name="Andersson S.G.E."/>
        </authorList>
    </citation>
    <scope>NUCLEOTIDE SEQUENCE [LARGE SCALE GENOMIC DNA]</scope>
    <source>
        <strain>Toulouse</strain>
    </source>
</reference>
<keyword id="KW-0687">Ribonucleoprotein</keyword>
<keyword id="KW-0689">Ribosomal protein</keyword>
<keyword id="KW-0694">RNA-binding</keyword>
<keyword id="KW-0699">rRNA-binding</keyword>
<dbReference type="EMBL" id="BX897700">
    <property type="protein sequence ID" value="CAF25583.1"/>
    <property type="molecule type" value="Genomic_DNA"/>
</dbReference>
<dbReference type="RefSeq" id="WP_011178910.1">
    <property type="nucleotide sequence ID" value="NC_005955.1"/>
</dbReference>
<dbReference type="SMR" id="Q6G1G7"/>
<dbReference type="KEGG" id="bqu:BQ00760"/>
<dbReference type="eggNOG" id="COG0292">
    <property type="taxonomic scope" value="Bacteria"/>
</dbReference>
<dbReference type="HOGENOM" id="CLU_123265_0_1_5"/>
<dbReference type="OrthoDB" id="9808966at2"/>
<dbReference type="Proteomes" id="UP000000597">
    <property type="component" value="Chromosome"/>
</dbReference>
<dbReference type="GO" id="GO:1990904">
    <property type="term" value="C:ribonucleoprotein complex"/>
    <property type="evidence" value="ECO:0007669"/>
    <property type="project" value="UniProtKB-KW"/>
</dbReference>
<dbReference type="GO" id="GO:0005840">
    <property type="term" value="C:ribosome"/>
    <property type="evidence" value="ECO:0007669"/>
    <property type="project" value="UniProtKB-KW"/>
</dbReference>
<dbReference type="GO" id="GO:0019843">
    <property type="term" value="F:rRNA binding"/>
    <property type="evidence" value="ECO:0007669"/>
    <property type="project" value="UniProtKB-UniRule"/>
</dbReference>
<dbReference type="GO" id="GO:0003735">
    <property type="term" value="F:structural constituent of ribosome"/>
    <property type="evidence" value="ECO:0007669"/>
    <property type="project" value="InterPro"/>
</dbReference>
<dbReference type="GO" id="GO:0000027">
    <property type="term" value="P:ribosomal large subunit assembly"/>
    <property type="evidence" value="ECO:0007669"/>
    <property type="project" value="UniProtKB-UniRule"/>
</dbReference>
<dbReference type="GO" id="GO:0006412">
    <property type="term" value="P:translation"/>
    <property type="evidence" value="ECO:0007669"/>
    <property type="project" value="InterPro"/>
</dbReference>
<dbReference type="CDD" id="cd07026">
    <property type="entry name" value="Ribosomal_L20"/>
    <property type="match status" value="1"/>
</dbReference>
<dbReference type="FunFam" id="1.10.1900.20:FF:000001">
    <property type="entry name" value="50S ribosomal protein L20"/>
    <property type="match status" value="1"/>
</dbReference>
<dbReference type="Gene3D" id="6.10.160.10">
    <property type="match status" value="1"/>
</dbReference>
<dbReference type="Gene3D" id="1.10.1900.20">
    <property type="entry name" value="Ribosomal protein L20"/>
    <property type="match status" value="1"/>
</dbReference>
<dbReference type="HAMAP" id="MF_00382">
    <property type="entry name" value="Ribosomal_bL20"/>
    <property type="match status" value="1"/>
</dbReference>
<dbReference type="InterPro" id="IPR005813">
    <property type="entry name" value="Ribosomal_bL20"/>
</dbReference>
<dbReference type="InterPro" id="IPR049946">
    <property type="entry name" value="RIBOSOMAL_L20_CS"/>
</dbReference>
<dbReference type="InterPro" id="IPR035566">
    <property type="entry name" value="Ribosomal_protein_bL20_C"/>
</dbReference>
<dbReference type="NCBIfam" id="TIGR01032">
    <property type="entry name" value="rplT_bact"/>
    <property type="match status" value="1"/>
</dbReference>
<dbReference type="PANTHER" id="PTHR10986">
    <property type="entry name" value="39S RIBOSOMAL PROTEIN L20"/>
    <property type="match status" value="1"/>
</dbReference>
<dbReference type="Pfam" id="PF00453">
    <property type="entry name" value="Ribosomal_L20"/>
    <property type="match status" value="1"/>
</dbReference>
<dbReference type="PRINTS" id="PR00062">
    <property type="entry name" value="RIBOSOMALL20"/>
</dbReference>
<dbReference type="SUPFAM" id="SSF74731">
    <property type="entry name" value="Ribosomal protein L20"/>
    <property type="match status" value="1"/>
</dbReference>
<dbReference type="PROSITE" id="PS00937">
    <property type="entry name" value="RIBOSOMAL_L20"/>
    <property type="match status" value="1"/>
</dbReference>